<protein>
    <recommendedName>
        <fullName evidence="1">tRNA (guanine(37)-N(1))-methyltransferase</fullName>
        <ecNumber evidence="1">2.1.1.228</ecNumber>
    </recommendedName>
    <alternativeName>
        <fullName evidence="1">M1G-methyltransferase</fullName>
    </alternativeName>
    <alternativeName>
        <fullName evidence="1">tRNA [GM37] methyltransferase</fullName>
    </alternativeName>
    <alternativeName>
        <fullName evidence="1">tRNA methyltransferase 5 homolog</fullName>
    </alternativeName>
</protein>
<evidence type="ECO:0000255" key="1">
    <source>
        <dbReference type="HAMAP-Rule" id="MF_03152"/>
    </source>
</evidence>
<evidence type="ECO:0000256" key="2">
    <source>
        <dbReference type="SAM" id="MobiDB-lite"/>
    </source>
</evidence>
<evidence type="ECO:0000305" key="3"/>
<gene>
    <name type="ORF">AGAP006124</name>
</gene>
<keyword id="KW-0963">Cytoplasm</keyword>
<keyword id="KW-0489">Methyltransferase</keyword>
<keyword id="KW-0496">Mitochondrion</keyword>
<keyword id="KW-0539">Nucleus</keyword>
<keyword id="KW-1185">Reference proteome</keyword>
<keyword id="KW-0949">S-adenosyl-L-methionine</keyword>
<keyword id="KW-0808">Transferase</keyword>
<keyword id="KW-0809">Transit peptide</keyword>
<keyword id="KW-0819">tRNA processing</keyword>
<comment type="function">
    <text evidence="1">Specifically methylates the N1 position of guanosine-37 in various cytoplasmic and mitochondrial tRNAs. Methylation is not dependent on the nature of the nucleoside 5' of the target nucleoside. This is the first step in the biosynthesis of wybutosine (yW), a modified base adjacent to the anticodon of tRNAs and required for accurate decoding.</text>
</comment>
<comment type="catalytic activity">
    <reaction evidence="1">
        <text>guanosine(37) in tRNA + S-adenosyl-L-methionine = N(1)-methylguanosine(37) in tRNA + S-adenosyl-L-homocysteine + H(+)</text>
        <dbReference type="Rhea" id="RHEA:36899"/>
        <dbReference type="Rhea" id="RHEA-COMP:10145"/>
        <dbReference type="Rhea" id="RHEA-COMP:10147"/>
        <dbReference type="ChEBI" id="CHEBI:15378"/>
        <dbReference type="ChEBI" id="CHEBI:57856"/>
        <dbReference type="ChEBI" id="CHEBI:59789"/>
        <dbReference type="ChEBI" id="CHEBI:73542"/>
        <dbReference type="ChEBI" id="CHEBI:74269"/>
        <dbReference type="EC" id="2.1.1.228"/>
    </reaction>
</comment>
<comment type="subunit">
    <text evidence="1">Monomer.</text>
</comment>
<comment type="subcellular location">
    <subcellularLocation>
        <location evidence="1">Mitochondrion matrix</location>
    </subcellularLocation>
    <subcellularLocation>
        <location evidence="1">Nucleus</location>
    </subcellularLocation>
    <subcellularLocation>
        <location evidence="1">Cytoplasm</location>
    </subcellularLocation>
    <text evidence="1">Predominantly in the mitochondria and in the nucleus.</text>
</comment>
<comment type="similarity">
    <text evidence="3">Belongs to the class I-like SAM-binding methyltransferase superfamily. TRM5/TYW2 family.</text>
</comment>
<name>TRM5_ANOGA</name>
<feature type="transit peptide" description="Mitochondrion" evidence="1">
    <location>
        <begin position="1"/>
        <end position="30"/>
    </location>
</feature>
<feature type="chain" id="PRO_0000414128" description="tRNA (guanine(37)-N(1))-methyltransferase">
    <location>
        <begin position="31"/>
        <end position="556"/>
    </location>
</feature>
<feature type="region of interest" description="Disordered" evidence="2">
    <location>
        <begin position="444"/>
        <end position="465"/>
    </location>
</feature>
<feature type="region of interest" description="Disordered" evidence="2">
    <location>
        <begin position="524"/>
        <end position="556"/>
    </location>
</feature>
<feature type="compositionally biased region" description="Basic and acidic residues" evidence="2">
    <location>
        <begin position="454"/>
        <end position="465"/>
    </location>
</feature>
<feature type="compositionally biased region" description="Basic and acidic residues" evidence="2">
    <location>
        <begin position="540"/>
        <end position="549"/>
    </location>
</feature>
<feature type="binding site" evidence="1">
    <location>
        <position position="249"/>
    </location>
    <ligand>
        <name>S-adenosyl-L-methionine</name>
        <dbReference type="ChEBI" id="CHEBI:59789"/>
    </ligand>
</feature>
<feature type="binding site" evidence="1">
    <location>
        <begin position="287"/>
        <end position="288"/>
    </location>
    <ligand>
        <name>S-adenosyl-L-methionine</name>
        <dbReference type="ChEBI" id="CHEBI:59789"/>
    </ligand>
</feature>
<feature type="binding site" evidence="1">
    <location>
        <begin position="315"/>
        <end position="316"/>
    </location>
    <ligand>
        <name>S-adenosyl-L-methionine</name>
        <dbReference type="ChEBI" id="CHEBI:59789"/>
    </ligand>
</feature>
<feature type="binding site" evidence="1">
    <location>
        <position position="346"/>
    </location>
    <ligand>
        <name>S-adenosyl-L-methionine</name>
        <dbReference type="ChEBI" id="CHEBI:59789"/>
    </ligand>
</feature>
<organism>
    <name type="scientific">Anopheles gambiae</name>
    <name type="common">African malaria mosquito</name>
    <dbReference type="NCBI Taxonomy" id="7165"/>
    <lineage>
        <taxon>Eukaryota</taxon>
        <taxon>Metazoa</taxon>
        <taxon>Ecdysozoa</taxon>
        <taxon>Arthropoda</taxon>
        <taxon>Hexapoda</taxon>
        <taxon>Insecta</taxon>
        <taxon>Pterygota</taxon>
        <taxon>Neoptera</taxon>
        <taxon>Endopterygota</taxon>
        <taxon>Diptera</taxon>
        <taxon>Nematocera</taxon>
        <taxon>Culicoidea</taxon>
        <taxon>Culicidae</taxon>
        <taxon>Anophelinae</taxon>
        <taxon>Anopheles</taxon>
    </lineage>
</organism>
<proteinExistence type="inferred from homology"/>
<sequence>MIITTKALTVLPHSGLRTTHRSLLARLRHYFKNMLCPDLHPPATVRGMKLLDRSAFSKTIKVPHLLVPKDKNLNDICRASKKYLLKMERYKPVITEQYKITLHPLAVQKWEDLADLNLEKLDIGSEALVWEEIQLKYENWKYDEIFKAVLPADKEALSSFSKIGHIIHLNLKDHLLPYKELIGQVICDKIADCRTVVNKSLSIDNTYRNFQMELLCGEPDYRVSVKENACLFEFDFSKVYWNPRLSTEHEKIVKMLAKTDTLFDLYAGVGPFTVPAARRGCKVLANDLNPDSYEALVNNCALNKVSKHVTCHNKDAVDFIKHEVKQALLEKCTDESMEGDIHITMNLPAMAVEHLVHFPGLLKDEDVVLRKQPLVHVYCFAKGVEDKKQIARELVEHWLGTDVTDKLKEIAFVRNVAPNKDMMRVSFYLTEDLLLGRTAVKKRQHEEEDLPQLEEAKRPSNKMKDQRKQLAKKAKTVFSVSQVKKGNLKKTKEVSSNLKKIQVNDKREKVDKKFENLHAQIVSKKAAKPAPKPLPAKNKSKPDTKKIEADLNEMQM</sequence>
<accession>Q7Q5Z3</accession>
<dbReference type="EC" id="2.1.1.228" evidence="1"/>
<dbReference type="EMBL" id="AAAB01008960">
    <property type="protein sequence ID" value="EAA10891.4"/>
    <property type="molecule type" value="Genomic_DNA"/>
</dbReference>
<dbReference type="RefSeq" id="XP_316184.4">
    <property type="nucleotide sequence ID" value="XM_316184.4"/>
</dbReference>
<dbReference type="SMR" id="Q7Q5Z3"/>
<dbReference type="FunCoup" id="Q7Q5Z3">
    <property type="interactions" value="1248"/>
</dbReference>
<dbReference type="STRING" id="7165.Q7Q5Z3"/>
<dbReference type="PaxDb" id="7165-AGAP006124-PA"/>
<dbReference type="VEuPathDB" id="VectorBase:AGAMI1_014589"/>
<dbReference type="VEuPathDB" id="VectorBase:AGAP029689"/>
<dbReference type="VEuPathDB" id="VectorBase:AGAP029690"/>
<dbReference type="eggNOG" id="KOG2078">
    <property type="taxonomic scope" value="Eukaryota"/>
</dbReference>
<dbReference type="HOGENOM" id="CLU_022610_2_3_1"/>
<dbReference type="InParanoid" id="Q7Q5Z3"/>
<dbReference type="OMA" id="VGSHSQF"/>
<dbReference type="OrthoDB" id="6416727at2759"/>
<dbReference type="PhylomeDB" id="Q7Q5Z3"/>
<dbReference type="Proteomes" id="UP000007062">
    <property type="component" value="Chromosome 2L"/>
</dbReference>
<dbReference type="GO" id="GO:0005737">
    <property type="term" value="C:cytoplasm"/>
    <property type="evidence" value="ECO:0000318"/>
    <property type="project" value="GO_Central"/>
</dbReference>
<dbReference type="GO" id="GO:0005759">
    <property type="term" value="C:mitochondrial matrix"/>
    <property type="evidence" value="ECO:0000318"/>
    <property type="project" value="GO_Central"/>
</dbReference>
<dbReference type="GO" id="GO:0005634">
    <property type="term" value="C:nucleus"/>
    <property type="evidence" value="ECO:0007669"/>
    <property type="project" value="UniProtKB-SubCell"/>
</dbReference>
<dbReference type="GO" id="GO:0052906">
    <property type="term" value="F:tRNA (guanine(37)-N1)-methyltransferase activity"/>
    <property type="evidence" value="ECO:0007669"/>
    <property type="project" value="UniProtKB-UniRule"/>
</dbReference>
<dbReference type="GO" id="GO:0008175">
    <property type="term" value="F:tRNA methyltransferase activity"/>
    <property type="evidence" value="ECO:0000318"/>
    <property type="project" value="GO_Central"/>
</dbReference>
<dbReference type="GO" id="GO:0070901">
    <property type="term" value="P:mitochondrial tRNA methylation"/>
    <property type="evidence" value="ECO:0000318"/>
    <property type="project" value="GO_Central"/>
</dbReference>
<dbReference type="GO" id="GO:0002939">
    <property type="term" value="P:tRNA N1-guanine methylation"/>
    <property type="evidence" value="ECO:0000318"/>
    <property type="project" value="GO_Central"/>
</dbReference>
<dbReference type="CDD" id="cd02440">
    <property type="entry name" value="AdoMet_MTases"/>
    <property type="match status" value="1"/>
</dbReference>
<dbReference type="FunFam" id="3.30.300.110:FF:000001">
    <property type="entry name" value="tRNA (guanine(37)-N1)-methyltransferase"/>
    <property type="match status" value="1"/>
</dbReference>
<dbReference type="Gene3D" id="3.30.300.110">
    <property type="entry name" value="Met-10+ protein-like domains"/>
    <property type="match status" value="1"/>
</dbReference>
<dbReference type="Gene3D" id="3.40.50.150">
    <property type="entry name" value="Vaccinia Virus protein VP39"/>
    <property type="match status" value="1"/>
</dbReference>
<dbReference type="HAMAP" id="MF_03152">
    <property type="entry name" value="TRM5"/>
    <property type="match status" value="1"/>
</dbReference>
<dbReference type="InterPro" id="IPR030382">
    <property type="entry name" value="MeTrfase_TRM5/TYW2"/>
</dbReference>
<dbReference type="InterPro" id="IPR029063">
    <property type="entry name" value="SAM-dependent_MTases_sf"/>
</dbReference>
<dbReference type="InterPro" id="IPR056743">
    <property type="entry name" value="TRM5-TYW2-like_MTfase"/>
</dbReference>
<dbReference type="InterPro" id="IPR056744">
    <property type="entry name" value="TRM5/TYW2-like_N"/>
</dbReference>
<dbReference type="InterPro" id="IPR025792">
    <property type="entry name" value="tRNA_Gua_MeTrfase_euk"/>
</dbReference>
<dbReference type="PANTHER" id="PTHR23245:SF36">
    <property type="entry name" value="TRNA (GUANINE(37)-N1)-METHYLTRANSFERASE"/>
    <property type="match status" value="1"/>
</dbReference>
<dbReference type="PANTHER" id="PTHR23245">
    <property type="entry name" value="TRNA METHYLTRANSFERASE"/>
    <property type="match status" value="1"/>
</dbReference>
<dbReference type="Pfam" id="PF02475">
    <property type="entry name" value="TRM5-TYW2_MTfase"/>
    <property type="match status" value="1"/>
</dbReference>
<dbReference type="Pfam" id="PF25133">
    <property type="entry name" value="TYW2_N_2"/>
    <property type="match status" value="1"/>
</dbReference>
<dbReference type="SUPFAM" id="SSF53335">
    <property type="entry name" value="S-adenosyl-L-methionine-dependent methyltransferases"/>
    <property type="match status" value="1"/>
</dbReference>
<dbReference type="PROSITE" id="PS51684">
    <property type="entry name" value="SAM_MT_TRM5_TYW2"/>
    <property type="match status" value="1"/>
</dbReference>
<reference key="1">
    <citation type="journal article" date="2002" name="Science">
        <title>The genome sequence of the malaria mosquito Anopheles gambiae.</title>
        <authorList>
            <person name="Holt R.A."/>
            <person name="Subramanian G.M."/>
            <person name="Halpern A."/>
            <person name="Sutton G.G."/>
            <person name="Charlab R."/>
            <person name="Nusskern D.R."/>
            <person name="Wincker P."/>
            <person name="Clark A.G."/>
            <person name="Ribeiro J.M.C."/>
            <person name="Wides R."/>
            <person name="Salzberg S.L."/>
            <person name="Loftus B.J."/>
            <person name="Yandell M.D."/>
            <person name="Majoros W.H."/>
            <person name="Rusch D.B."/>
            <person name="Lai Z."/>
            <person name="Kraft C.L."/>
            <person name="Abril J.F."/>
            <person name="Anthouard V."/>
            <person name="Arensburger P."/>
            <person name="Atkinson P.W."/>
            <person name="Baden H."/>
            <person name="de Berardinis V."/>
            <person name="Baldwin D."/>
            <person name="Benes V."/>
            <person name="Biedler J."/>
            <person name="Blass C."/>
            <person name="Bolanos R."/>
            <person name="Boscus D."/>
            <person name="Barnstead M."/>
            <person name="Cai S."/>
            <person name="Center A."/>
            <person name="Chaturverdi K."/>
            <person name="Christophides G.K."/>
            <person name="Chrystal M.A.M."/>
            <person name="Clamp M."/>
            <person name="Cravchik A."/>
            <person name="Curwen V."/>
            <person name="Dana A."/>
            <person name="Delcher A."/>
            <person name="Dew I."/>
            <person name="Evans C.A."/>
            <person name="Flanigan M."/>
            <person name="Grundschober-Freimoser A."/>
            <person name="Friedli L."/>
            <person name="Gu Z."/>
            <person name="Guan P."/>
            <person name="Guigo R."/>
            <person name="Hillenmeyer M.E."/>
            <person name="Hladun S.L."/>
            <person name="Hogan J.R."/>
            <person name="Hong Y.S."/>
            <person name="Hoover J."/>
            <person name="Jaillon O."/>
            <person name="Ke Z."/>
            <person name="Kodira C.D."/>
            <person name="Kokoza E."/>
            <person name="Koutsos A."/>
            <person name="Letunic I."/>
            <person name="Levitsky A.A."/>
            <person name="Liang Y."/>
            <person name="Lin J.-J."/>
            <person name="Lobo N.F."/>
            <person name="Lopez J.R."/>
            <person name="Malek J.A."/>
            <person name="McIntosh T.C."/>
            <person name="Meister S."/>
            <person name="Miller J.R."/>
            <person name="Mobarry C."/>
            <person name="Mongin E."/>
            <person name="Murphy S.D."/>
            <person name="O'Brochta D.A."/>
            <person name="Pfannkoch C."/>
            <person name="Qi R."/>
            <person name="Regier M.A."/>
            <person name="Remington K."/>
            <person name="Shao H."/>
            <person name="Sharakhova M.V."/>
            <person name="Sitter C.D."/>
            <person name="Shetty J."/>
            <person name="Smith T.J."/>
            <person name="Strong R."/>
            <person name="Sun J."/>
            <person name="Thomasova D."/>
            <person name="Ton L.Q."/>
            <person name="Topalis P."/>
            <person name="Tu Z.J."/>
            <person name="Unger M.F."/>
            <person name="Walenz B."/>
            <person name="Wang A.H."/>
            <person name="Wang J."/>
            <person name="Wang M."/>
            <person name="Wang X."/>
            <person name="Woodford K.J."/>
            <person name="Wortman J.R."/>
            <person name="Wu M."/>
            <person name="Yao A."/>
            <person name="Zdobnov E.M."/>
            <person name="Zhang H."/>
            <person name="Zhao Q."/>
            <person name="Zhao S."/>
            <person name="Zhu S.C."/>
            <person name="Zhimulev I."/>
            <person name="Coluzzi M."/>
            <person name="della Torre A."/>
            <person name="Roth C.W."/>
            <person name="Louis C."/>
            <person name="Kalush F."/>
            <person name="Mural R.J."/>
            <person name="Myers E.W."/>
            <person name="Adams M.D."/>
            <person name="Smith H.O."/>
            <person name="Broder S."/>
            <person name="Gardner M.J."/>
            <person name="Fraser C.M."/>
            <person name="Birney E."/>
            <person name="Bork P."/>
            <person name="Brey P.T."/>
            <person name="Venter J.C."/>
            <person name="Weissenbach J."/>
            <person name="Kafatos F.C."/>
            <person name="Collins F.H."/>
            <person name="Hoffman S.L."/>
        </authorList>
    </citation>
    <scope>NUCLEOTIDE SEQUENCE [LARGE SCALE GENOMIC DNA]</scope>
    <source>
        <strain>PEST</strain>
    </source>
</reference>